<feature type="chain" id="PRO_1000075630" description="Holo-[acyl-carrier-protein] synthase">
    <location>
        <begin position="1"/>
        <end position="133"/>
    </location>
</feature>
<feature type="binding site" evidence="1">
    <location>
        <position position="8"/>
    </location>
    <ligand>
        <name>Mg(2+)</name>
        <dbReference type="ChEBI" id="CHEBI:18420"/>
    </ligand>
</feature>
<feature type="binding site" evidence="1">
    <location>
        <position position="57"/>
    </location>
    <ligand>
        <name>Mg(2+)</name>
        <dbReference type="ChEBI" id="CHEBI:18420"/>
    </ligand>
</feature>
<sequence length="133" mass="14969">MIVGLGNDLVDIRRIERMLVRYGERFIQRIFTDIERNRSENLKKNSSSYAKRFAAKEACAKALGTGIACGINWKDMGVVNLSSGKPIMQLTNHAQVQLQKLLPPHHDAIIHLSITDDFPWAQAFVIIEALPRG</sequence>
<organism>
    <name type="scientific">Bartonella tribocorum (strain CIP 105476 / IBS 506)</name>
    <dbReference type="NCBI Taxonomy" id="382640"/>
    <lineage>
        <taxon>Bacteria</taxon>
        <taxon>Pseudomonadati</taxon>
        <taxon>Pseudomonadota</taxon>
        <taxon>Alphaproteobacteria</taxon>
        <taxon>Hyphomicrobiales</taxon>
        <taxon>Bartonellaceae</taxon>
        <taxon>Bartonella</taxon>
    </lineage>
</organism>
<accession>A9IRM3</accession>
<dbReference type="EC" id="2.7.8.7" evidence="1"/>
<dbReference type="EMBL" id="AM260525">
    <property type="protein sequence ID" value="CAK01199.1"/>
    <property type="molecule type" value="Genomic_DNA"/>
</dbReference>
<dbReference type="RefSeq" id="WP_012231312.1">
    <property type="nucleotide sequence ID" value="NC_010161.1"/>
</dbReference>
<dbReference type="SMR" id="A9IRM3"/>
<dbReference type="KEGG" id="btr:BT_0784"/>
<dbReference type="eggNOG" id="COG0736">
    <property type="taxonomic scope" value="Bacteria"/>
</dbReference>
<dbReference type="HOGENOM" id="CLU_089696_0_2_5"/>
<dbReference type="Proteomes" id="UP000001592">
    <property type="component" value="Chromosome"/>
</dbReference>
<dbReference type="GO" id="GO:0005737">
    <property type="term" value="C:cytoplasm"/>
    <property type="evidence" value="ECO:0007669"/>
    <property type="project" value="UniProtKB-SubCell"/>
</dbReference>
<dbReference type="GO" id="GO:0008897">
    <property type="term" value="F:holo-[acyl-carrier-protein] synthase activity"/>
    <property type="evidence" value="ECO:0007669"/>
    <property type="project" value="UniProtKB-UniRule"/>
</dbReference>
<dbReference type="GO" id="GO:0000287">
    <property type="term" value="F:magnesium ion binding"/>
    <property type="evidence" value="ECO:0007669"/>
    <property type="project" value="UniProtKB-UniRule"/>
</dbReference>
<dbReference type="GO" id="GO:0006633">
    <property type="term" value="P:fatty acid biosynthetic process"/>
    <property type="evidence" value="ECO:0007669"/>
    <property type="project" value="UniProtKB-UniRule"/>
</dbReference>
<dbReference type="Gene3D" id="3.90.470.20">
    <property type="entry name" value="4'-phosphopantetheinyl transferase domain"/>
    <property type="match status" value="1"/>
</dbReference>
<dbReference type="HAMAP" id="MF_00101">
    <property type="entry name" value="AcpS"/>
    <property type="match status" value="1"/>
</dbReference>
<dbReference type="InterPro" id="IPR008278">
    <property type="entry name" value="4-PPantetheinyl_Trfase_dom"/>
</dbReference>
<dbReference type="InterPro" id="IPR037143">
    <property type="entry name" value="4-PPantetheinyl_Trfase_dom_sf"/>
</dbReference>
<dbReference type="InterPro" id="IPR002582">
    <property type="entry name" value="ACPS"/>
</dbReference>
<dbReference type="InterPro" id="IPR004568">
    <property type="entry name" value="Ppantetheine-prot_Trfase_dom"/>
</dbReference>
<dbReference type="NCBIfam" id="TIGR00516">
    <property type="entry name" value="acpS"/>
    <property type="match status" value="1"/>
</dbReference>
<dbReference type="NCBIfam" id="TIGR00556">
    <property type="entry name" value="pantethn_trn"/>
    <property type="match status" value="1"/>
</dbReference>
<dbReference type="Pfam" id="PF01648">
    <property type="entry name" value="ACPS"/>
    <property type="match status" value="1"/>
</dbReference>
<dbReference type="SUPFAM" id="SSF56214">
    <property type="entry name" value="4'-phosphopantetheinyl transferase"/>
    <property type="match status" value="1"/>
</dbReference>
<evidence type="ECO:0000255" key="1">
    <source>
        <dbReference type="HAMAP-Rule" id="MF_00101"/>
    </source>
</evidence>
<keyword id="KW-0963">Cytoplasm</keyword>
<keyword id="KW-0275">Fatty acid biosynthesis</keyword>
<keyword id="KW-0276">Fatty acid metabolism</keyword>
<keyword id="KW-0444">Lipid biosynthesis</keyword>
<keyword id="KW-0443">Lipid metabolism</keyword>
<keyword id="KW-0460">Magnesium</keyword>
<keyword id="KW-0479">Metal-binding</keyword>
<keyword id="KW-0808">Transferase</keyword>
<name>ACPS_BART1</name>
<proteinExistence type="inferred from homology"/>
<protein>
    <recommendedName>
        <fullName evidence="1">Holo-[acyl-carrier-protein] synthase</fullName>
        <shortName evidence="1">Holo-ACP synthase</shortName>
        <ecNumber evidence="1">2.7.8.7</ecNumber>
    </recommendedName>
    <alternativeName>
        <fullName evidence="1">4'-phosphopantetheinyl transferase AcpS</fullName>
    </alternativeName>
</protein>
<reference key="1">
    <citation type="journal article" date="2007" name="Nat. Genet.">
        <title>Genomic analysis of Bartonella identifies type IV secretion systems as host adaptability factors.</title>
        <authorList>
            <person name="Saenz H.L."/>
            <person name="Engel P."/>
            <person name="Stoeckli M.C."/>
            <person name="Lanz C."/>
            <person name="Raddatz G."/>
            <person name="Vayssier-Taussat M."/>
            <person name="Birtles R."/>
            <person name="Schuster S.C."/>
            <person name="Dehio C."/>
        </authorList>
    </citation>
    <scope>NUCLEOTIDE SEQUENCE [LARGE SCALE GENOMIC DNA]</scope>
    <source>
        <strain>CIP 105476 / IBS 506</strain>
    </source>
</reference>
<comment type="function">
    <text evidence="1">Transfers the 4'-phosphopantetheine moiety from coenzyme A to a Ser of acyl-carrier-protein.</text>
</comment>
<comment type="catalytic activity">
    <reaction evidence="1">
        <text>apo-[ACP] + CoA = holo-[ACP] + adenosine 3',5'-bisphosphate + H(+)</text>
        <dbReference type="Rhea" id="RHEA:12068"/>
        <dbReference type="Rhea" id="RHEA-COMP:9685"/>
        <dbReference type="Rhea" id="RHEA-COMP:9690"/>
        <dbReference type="ChEBI" id="CHEBI:15378"/>
        <dbReference type="ChEBI" id="CHEBI:29999"/>
        <dbReference type="ChEBI" id="CHEBI:57287"/>
        <dbReference type="ChEBI" id="CHEBI:58343"/>
        <dbReference type="ChEBI" id="CHEBI:64479"/>
        <dbReference type="EC" id="2.7.8.7"/>
    </reaction>
</comment>
<comment type="cofactor">
    <cofactor evidence="1">
        <name>Mg(2+)</name>
        <dbReference type="ChEBI" id="CHEBI:18420"/>
    </cofactor>
</comment>
<comment type="subcellular location">
    <subcellularLocation>
        <location evidence="1">Cytoplasm</location>
    </subcellularLocation>
</comment>
<comment type="similarity">
    <text evidence="1">Belongs to the P-Pant transferase superfamily. AcpS family.</text>
</comment>
<gene>
    <name evidence="1" type="primary">acpS</name>
    <name type="ordered locus">BT_0784</name>
</gene>